<organism>
    <name type="scientific">Enterobacteria phage T4</name>
    <name type="common">Bacteriophage T4</name>
    <dbReference type="NCBI Taxonomy" id="10665"/>
    <lineage>
        <taxon>Viruses</taxon>
        <taxon>Duplodnaviria</taxon>
        <taxon>Heunggongvirae</taxon>
        <taxon>Uroviricota</taxon>
        <taxon>Caudoviricetes</taxon>
        <taxon>Straboviridae</taxon>
        <taxon>Tevenvirinae</taxon>
        <taxon>Tequatrovirus</taxon>
    </lineage>
</organism>
<sequence length="133" mass="15264">MKQLIIKRLNLLICCLCIVIAYGYYAINDYMHYKDYDVTVVNTLTGTQGKGSSLSFIAVYELKDGYRFSEYISPETYSSIEKGDNITVSLRPFDVKQTWFDNIVWFFGMALVQSICGTYIVCSILFRVIGKIE</sequence>
<reference key="1">
    <citation type="submission" date="1996-11" db="EMBL/GenBank/DDBJ databases">
        <title>The 10.7 kb 'nonessential' region of bacteriophage T4 between the genes tk and nrdC: twenty new t4 genes, generally conserved among T-even phages.</title>
        <authorList>
            <person name="Mzhavia N."/>
            <person name="Marusich E."/>
            <person name="Djavakhishvili T."/>
            <person name="Neitzel J."/>
            <person name="Peterson S."/>
            <person name="Awaya M."/>
            <person name="Eidermiller J."/>
            <person name="Canada D."/>
            <person name="Tracy J."/>
            <person name="Gailbreath K."/>
            <person name="Paddison P."/>
            <person name="Anderson B."/>
            <person name="Stidham T."/>
            <person name="Blattner F."/>
            <person name="Kutter E.M."/>
        </authorList>
    </citation>
    <scope>NUCLEOTIDE SEQUENCE [GENOMIC DNA]</scope>
</reference>
<reference key="2">
    <citation type="journal article" date="2003" name="Microbiol. Mol. Biol. Rev.">
        <title>Bacteriophage T4 genome.</title>
        <authorList>
            <person name="Miller E.S."/>
            <person name="Kutter E."/>
            <person name="Mosig G."/>
            <person name="Arisaka F."/>
            <person name="Kunisawa T."/>
            <person name="Ruger W."/>
        </authorList>
    </citation>
    <scope>NUCLEOTIDE SEQUENCE [LARGE SCALE GENOMIC DNA]</scope>
</reference>
<organismHost>
    <name type="scientific">Escherichia coli</name>
    <dbReference type="NCBI Taxonomy" id="562"/>
</organismHost>
<accession>P39258</accession>
<accession>Q96221</accession>
<dbReference type="EMBL" id="U76612">
    <property type="protein sequence ID" value="AAB26975.1"/>
    <property type="molecule type" value="Genomic_DNA"/>
</dbReference>
<dbReference type="EMBL" id="AF158101">
    <property type="protein sequence ID" value="AAD42638.1"/>
    <property type="molecule type" value="Genomic_DNA"/>
</dbReference>
<dbReference type="RefSeq" id="NP_049705.1">
    <property type="nucleotide sequence ID" value="NC_000866.4"/>
</dbReference>
<dbReference type="GeneID" id="1258749"/>
<dbReference type="KEGG" id="vg:1258749"/>
<dbReference type="OrthoDB" id="24624at10239"/>
<dbReference type="Proteomes" id="UP000009087">
    <property type="component" value="Segment"/>
</dbReference>
<name>Y05C_BPT4</name>
<keyword id="KW-1185">Reference proteome</keyword>
<proteinExistence type="predicted"/>
<protein>
    <recommendedName>
        <fullName>Uncharacterized 15.3 kDa protein in nrdC-mobD intergenic region</fullName>
    </recommendedName>
</protein>
<feature type="chain" id="PRO_0000165121" description="Uncharacterized 15.3 kDa protein in nrdC-mobD intergenic region">
    <location>
        <begin position="1"/>
        <end position="133"/>
    </location>
</feature>
<gene>
    <name type="primary">y05C</name>
    <name type="synonym">nrdC.7</name>
</gene>